<comment type="function">
    <text evidence="1">Endonuclease that specifically degrades the RNA of RNA-DNA hybrids.</text>
</comment>
<comment type="catalytic activity">
    <reaction evidence="1">
        <text>Endonucleolytic cleavage to 5'-phosphomonoester.</text>
        <dbReference type="EC" id="3.1.26.4"/>
    </reaction>
</comment>
<comment type="cofactor">
    <cofactor evidence="1">
        <name>Mn(2+)</name>
        <dbReference type="ChEBI" id="CHEBI:29035"/>
    </cofactor>
    <cofactor evidence="1">
        <name>Mg(2+)</name>
        <dbReference type="ChEBI" id="CHEBI:18420"/>
    </cofactor>
    <text evidence="1">Manganese or magnesium. Binds 1 divalent metal ion per monomer in the absence of substrate. May bind a second metal ion after substrate binding.</text>
</comment>
<comment type="subcellular location">
    <subcellularLocation>
        <location evidence="1">Cytoplasm</location>
    </subcellularLocation>
</comment>
<comment type="similarity">
    <text evidence="1">Belongs to the RNase HII family.</text>
</comment>
<keyword id="KW-0963">Cytoplasm</keyword>
<keyword id="KW-0255">Endonuclease</keyword>
<keyword id="KW-0378">Hydrolase</keyword>
<keyword id="KW-0464">Manganese</keyword>
<keyword id="KW-0479">Metal-binding</keyword>
<keyword id="KW-0540">Nuclease</keyword>
<feature type="chain" id="PRO_1000091647" description="Ribonuclease HII">
    <location>
        <begin position="1"/>
        <end position="281"/>
    </location>
</feature>
<feature type="domain" description="RNase H type-2" evidence="2">
    <location>
        <begin position="73"/>
        <end position="261"/>
    </location>
</feature>
<feature type="region of interest" description="Disordered" evidence="3">
    <location>
        <begin position="1"/>
        <end position="46"/>
    </location>
</feature>
<feature type="compositionally biased region" description="Low complexity" evidence="3">
    <location>
        <begin position="33"/>
        <end position="46"/>
    </location>
</feature>
<feature type="binding site" evidence="1">
    <location>
        <position position="79"/>
    </location>
    <ligand>
        <name>a divalent metal cation</name>
        <dbReference type="ChEBI" id="CHEBI:60240"/>
    </ligand>
</feature>
<feature type="binding site" evidence="1">
    <location>
        <position position="80"/>
    </location>
    <ligand>
        <name>a divalent metal cation</name>
        <dbReference type="ChEBI" id="CHEBI:60240"/>
    </ligand>
</feature>
<feature type="binding site" evidence="1">
    <location>
        <position position="170"/>
    </location>
    <ligand>
        <name>a divalent metal cation</name>
        <dbReference type="ChEBI" id="CHEBI:60240"/>
    </ligand>
</feature>
<evidence type="ECO:0000255" key="1">
    <source>
        <dbReference type="HAMAP-Rule" id="MF_00052"/>
    </source>
</evidence>
<evidence type="ECO:0000255" key="2">
    <source>
        <dbReference type="PROSITE-ProRule" id="PRU01319"/>
    </source>
</evidence>
<evidence type="ECO:0000256" key="3">
    <source>
        <dbReference type="SAM" id="MobiDB-lite"/>
    </source>
</evidence>
<proteinExistence type="inferred from homology"/>
<name>RNH2_RHOPT</name>
<accession>B3QHK8</accession>
<sequence>MIRDTKQPIKVPAKPASRSGGKAKTVKPKTIKPKTSAKAAAAKPASAKGLKGVIAVAPPSFRRERALIKRGIWPIAGCDEAGRGPLAGPVVAAAVVLDPKRVPKGLDDSKRLSAEKREALFEEICATAQVSVVYASPERINRDNILRASLWALTRAVHALPDLPRHVFVDGRDRLATKCDCEAVIGGDGLIASIAAASIIAKVSRDRLMCKLAEQCPGYGFEQHKGYGVPEHLDALARLGPTVHHRRFFAPVAAAWQKIEGAPPPQIRDLFEADVTVEATA</sequence>
<protein>
    <recommendedName>
        <fullName evidence="1">Ribonuclease HII</fullName>
        <shortName evidence="1">RNase HII</shortName>
        <ecNumber evidence="1">3.1.26.4</ecNumber>
    </recommendedName>
</protein>
<reference key="1">
    <citation type="submission" date="2008-05" db="EMBL/GenBank/DDBJ databases">
        <title>Complete sequence of Rhodopseudomonas palustris TIE-1.</title>
        <authorList>
            <consortium name="US DOE Joint Genome Institute"/>
            <person name="Lucas S."/>
            <person name="Copeland A."/>
            <person name="Lapidus A."/>
            <person name="Glavina del Rio T."/>
            <person name="Dalin E."/>
            <person name="Tice H."/>
            <person name="Pitluck S."/>
            <person name="Chain P."/>
            <person name="Malfatti S."/>
            <person name="Shin M."/>
            <person name="Vergez L."/>
            <person name="Lang D."/>
            <person name="Schmutz J."/>
            <person name="Larimer F."/>
            <person name="Land M."/>
            <person name="Hauser L."/>
            <person name="Kyrpides N."/>
            <person name="Mikhailova N."/>
            <person name="Emerson D."/>
            <person name="Newman D.K."/>
            <person name="Roden E."/>
            <person name="Richardson P."/>
        </authorList>
    </citation>
    <scope>NUCLEOTIDE SEQUENCE [LARGE SCALE GENOMIC DNA]</scope>
    <source>
        <strain>TIE-1</strain>
    </source>
</reference>
<dbReference type="EC" id="3.1.26.4" evidence="1"/>
<dbReference type="EMBL" id="CP001096">
    <property type="protein sequence ID" value="ACE99765.1"/>
    <property type="molecule type" value="Genomic_DNA"/>
</dbReference>
<dbReference type="RefSeq" id="WP_012494770.1">
    <property type="nucleotide sequence ID" value="NC_011004.1"/>
</dbReference>
<dbReference type="SMR" id="B3QHK8"/>
<dbReference type="KEGG" id="rpt:Rpal_1226"/>
<dbReference type="HOGENOM" id="CLU_036532_2_2_5"/>
<dbReference type="OrthoDB" id="9803420at2"/>
<dbReference type="Proteomes" id="UP000001725">
    <property type="component" value="Chromosome"/>
</dbReference>
<dbReference type="GO" id="GO:0005737">
    <property type="term" value="C:cytoplasm"/>
    <property type="evidence" value="ECO:0007669"/>
    <property type="project" value="UniProtKB-SubCell"/>
</dbReference>
<dbReference type="GO" id="GO:0032299">
    <property type="term" value="C:ribonuclease H2 complex"/>
    <property type="evidence" value="ECO:0007669"/>
    <property type="project" value="TreeGrafter"/>
</dbReference>
<dbReference type="GO" id="GO:0030145">
    <property type="term" value="F:manganese ion binding"/>
    <property type="evidence" value="ECO:0007669"/>
    <property type="project" value="UniProtKB-UniRule"/>
</dbReference>
<dbReference type="GO" id="GO:0003723">
    <property type="term" value="F:RNA binding"/>
    <property type="evidence" value="ECO:0007669"/>
    <property type="project" value="InterPro"/>
</dbReference>
<dbReference type="GO" id="GO:0004523">
    <property type="term" value="F:RNA-DNA hybrid ribonuclease activity"/>
    <property type="evidence" value="ECO:0007669"/>
    <property type="project" value="UniProtKB-UniRule"/>
</dbReference>
<dbReference type="GO" id="GO:0043137">
    <property type="term" value="P:DNA replication, removal of RNA primer"/>
    <property type="evidence" value="ECO:0007669"/>
    <property type="project" value="TreeGrafter"/>
</dbReference>
<dbReference type="GO" id="GO:0006298">
    <property type="term" value="P:mismatch repair"/>
    <property type="evidence" value="ECO:0007669"/>
    <property type="project" value="TreeGrafter"/>
</dbReference>
<dbReference type="CDD" id="cd07182">
    <property type="entry name" value="RNase_HII_bacteria_HII_like"/>
    <property type="match status" value="1"/>
</dbReference>
<dbReference type="FunFam" id="3.30.420.10:FF:000078">
    <property type="entry name" value="Ribonuclease HII"/>
    <property type="match status" value="1"/>
</dbReference>
<dbReference type="Gene3D" id="3.30.420.10">
    <property type="entry name" value="Ribonuclease H-like superfamily/Ribonuclease H"/>
    <property type="match status" value="1"/>
</dbReference>
<dbReference type="HAMAP" id="MF_00052_B">
    <property type="entry name" value="RNase_HII_B"/>
    <property type="match status" value="1"/>
</dbReference>
<dbReference type="InterPro" id="IPR022898">
    <property type="entry name" value="RNase_HII"/>
</dbReference>
<dbReference type="InterPro" id="IPR001352">
    <property type="entry name" value="RNase_HII/HIII"/>
</dbReference>
<dbReference type="InterPro" id="IPR024567">
    <property type="entry name" value="RNase_HII/HIII_dom"/>
</dbReference>
<dbReference type="InterPro" id="IPR012337">
    <property type="entry name" value="RNaseH-like_sf"/>
</dbReference>
<dbReference type="InterPro" id="IPR036397">
    <property type="entry name" value="RNaseH_sf"/>
</dbReference>
<dbReference type="NCBIfam" id="NF000595">
    <property type="entry name" value="PRK00015.1-3"/>
    <property type="match status" value="1"/>
</dbReference>
<dbReference type="PANTHER" id="PTHR10954">
    <property type="entry name" value="RIBONUCLEASE H2 SUBUNIT A"/>
    <property type="match status" value="1"/>
</dbReference>
<dbReference type="PANTHER" id="PTHR10954:SF18">
    <property type="entry name" value="RIBONUCLEASE HII"/>
    <property type="match status" value="1"/>
</dbReference>
<dbReference type="Pfam" id="PF01351">
    <property type="entry name" value="RNase_HII"/>
    <property type="match status" value="1"/>
</dbReference>
<dbReference type="SUPFAM" id="SSF53098">
    <property type="entry name" value="Ribonuclease H-like"/>
    <property type="match status" value="1"/>
</dbReference>
<dbReference type="PROSITE" id="PS51975">
    <property type="entry name" value="RNASE_H_2"/>
    <property type="match status" value="1"/>
</dbReference>
<organism>
    <name type="scientific">Rhodopseudomonas palustris (strain TIE-1)</name>
    <dbReference type="NCBI Taxonomy" id="395960"/>
    <lineage>
        <taxon>Bacteria</taxon>
        <taxon>Pseudomonadati</taxon>
        <taxon>Pseudomonadota</taxon>
        <taxon>Alphaproteobacteria</taxon>
        <taxon>Hyphomicrobiales</taxon>
        <taxon>Nitrobacteraceae</taxon>
        <taxon>Rhodopseudomonas</taxon>
    </lineage>
</organism>
<gene>
    <name evidence="1" type="primary">rnhB</name>
    <name type="ordered locus">Rpal_1226</name>
</gene>